<sequence>MRHGKAHRKLGRTSAHRTAMFANMSASLIKHEQIVTTLPKAKELRPIVEKLVTLAKRGDLHARRQAISSVRDVEQVGKLFAVLGPRYKERQGGYIRVLKAGFRYGDNAPMAVIEFVDRDVSEKGKDSGPVYVNDAED</sequence>
<name>RL17_CAUVN</name>
<keyword id="KW-1185">Reference proteome</keyword>
<keyword id="KW-0687">Ribonucleoprotein</keyword>
<keyword id="KW-0689">Ribosomal protein</keyword>
<dbReference type="EMBL" id="CP001340">
    <property type="protein sequence ID" value="ACL94797.1"/>
    <property type="molecule type" value="Genomic_DNA"/>
</dbReference>
<dbReference type="RefSeq" id="WP_010919152.1">
    <property type="nucleotide sequence ID" value="NC_011916.1"/>
</dbReference>
<dbReference type="RefSeq" id="YP_002516705.1">
    <property type="nucleotide sequence ID" value="NC_011916.1"/>
</dbReference>
<dbReference type="SMR" id="B8H4G0"/>
<dbReference type="GeneID" id="7331787"/>
<dbReference type="KEGG" id="ccs:CCNA_01332"/>
<dbReference type="PATRIC" id="fig|565050.3.peg.1315"/>
<dbReference type="HOGENOM" id="CLU_074407_2_0_5"/>
<dbReference type="OrthoDB" id="9809073at2"/>
<dbReference type="PhylomeDB" id="B8H4G0"/>
<dbReference type="Proteomes" id="UP000001364">
    <property type="component" value="Chromosome"/>
</dbReference>
<dbReference type="GO" id="GO:0022625">
    <property type="term" value="C:cytosolic large ribosomal subunit"/>
    <property type="evidence" value="ECO:0007669"/>
    <property type="project" value="TreeGrafter"/>
</dbReference>
<dbReference type="GO" id="GO:0003735">
    <property type="term" value="F:structural constituent of ribosome"/>
    <property type="evidence" value="ECO:0007669"/>
    <property type="project" value="InterPro"/>
</dbReference>
<dbReference type="GO" id="GO:0006412">
    <property type="term" value="P:translation"/>
    <property type="evidence" value="ECO:0007669"/>
    <property type="project" value="UniProtKB-UniRule"/>
</dbReference>
<dbReference type="FunFam" id="3.90.1030.10:FF:000001">
    <property type="entry name" value="50S ribosomal protein L17"/>
    <property type="match status" value="1"/>
</dbReference>
<dbReference type="Gene3D" id="3.90.1030.10">
    <property type="entry name" value="Ribosomal protein L17"/>
    <property type="match status" value="1"/>
</dbReference>
<dbReference type="HAMAP" id="MF_01368">
    <property type="entry name" value="Ribosomal_bL17"/>
    <property type="match status" value="1"/>
</dbReference>
<dbReference type="InterPro" id="IPR000456">
    <property type="entry name" value="Ribosomal_bL17"/>
</dbReference>
<dbReference type="InterPro" id="IPR047859">
    <property type="entry name" value="Ribosomal_bL17_CS"/>
</dbReference>
<dbReference type="InterPro" id="IPR036373">
    <property type="entry name" value="Ribosomal_bL17_sf"/>
</dbReference>
<dbReference type="NCBIfam" id="TIGR00059">
    <property type="entry name" value="L17"/>
    <property type="match status" value="1"/>
</dbReference>
<dbReference type="PANTHER" id="PTHR14413:SF16">
    <property type="entry name" value="LARGE RIBOSOMAL SUBUNIT PROTEIN BL17M"/>
    <property type="match status" value="1"/>
</dbReference>
<dbReference type="PANTHER" id="PTHR14413">
    <property type="entry name" value="RIBOSOMAL PROTEIN L17"/>
    <property type="match status" value="1"/>
</dbReference>
<dbReference type="Pfam" id="PF01196">
    <property type="entry name" value="Ribosomal_L17"/>
    <property type="match status" value="1"/>
</dbReference>
<dbReference type="SUPFAM" id="SSF64263">
    <property type="entry name" value="Prokaryotic ribosomal protein L17"/>
    <property type="match status" value="1"/>
</dbReference>
<dbReference type="PROSITE" id="PS01167">
    <property type="entry name" value="RIBOSOMAL_L17"/>
    <property type="match status" value="1"/>
</dbReference>
<proteinExistence type="inferred from homology"/>
<protein>
    <recommendedName>
        <fullName evidence="1">Large ribosomal subunit protein bL17</fullName>
    </recommendedName>
    <alternativeName>
        <fullName evidence="2">50S ribosomal protein L17</fullName>
    </alternativeName>
</protein>
<organism>
    <name type="scientific">Caulobacter vibrioides (strain NA1000 / CB15N)</name>
    <name type="common">Caulobacter crescentus</name>
    <dbReference type="NCBI Taxonomy" id="565050"/>
    <lineage>
        <taxon>Bacteria</taxon>
        <taxon>Pseudomonadati</taxon>
        <taxon>Pseudomonadota</taxon>
        <taxon>Alphaproteobacteria</taxon>
        <taxon>Caulobacterales</taxon>
        <taxon>Caulobacteraceae</taxon>
        <taxon>Caulobacter</taxon>
    </lineage>
</organism>
<feature type="chain" id="PRO_1000184008" description="Large ribosomal subunit protein bL17">
    <location>
        <begin position="1"/>
        <end position="137"/>
    </location>
</feature>
<comment type="subunit">
    <text evidence="1">Part of the 50S ribosomal subunit. Contacts protein L32.</text>
</comment>
<comment type="similarity">
    <text evidence="1">Belongs to the bacterial ribosomal protein bL17 family.</text>
</comment>
<reference key="1">
    <citation type="journal article" date="2010" name="J. Bacteriol.">
        <title>The genetic basis of laboratory adaptation in Caulobacter crescentus.</title>
        <authorList>
            <person name="Marks M.E."/>
            <person name="Castro-Rojas C.M."/>
            <person name="Teiling C."/>
            <person name="Du L."/>
            <person name="Kapatral V."/>
            <person name="Walunas T.L."/>
            <person name="Crosson S."/>
        </authorList>
    </citation>
    <scope>NUCLEOTIDE SEQUENCE [LARGE SCALE GENOMIC DNA]</scope>
    <source>
        <strain>NA1000 / CB15N</strain>
    </source>
</reference>
<gene>
    <name evidence="1" type="primary">rplQ</name>
    <name type="ordered locus">CCNA_01332</name>
</gene>
<accession>B8H4G0</accession>
<evidence type="ECO:0000255" key="1">
    <source>
        <dbReference type="HAMAP-Rule" id="MF_01368"/>
    </source>
</evidence>
<evidence type="ECO:0000305" key="2"/>